<comment type="function">
    <text evidence="1">Transferase that catalyzes the transfer of sulfur from thiosulfate to thiophilic acceptors such as cyanide or dithiols. May function in a CysM-independent thiosulfate assimilation pathway by catalyzing the conversion of thiosulfate to sulfite, which can then be used for L-cysteine biosynthesis.</text>
</comment>
<comment type="catalytic activity">
    <reaction evidence="1">
        <text>thiosulfate + hydrogen cyanide = thiocyanate + sulfite + 2 H(+)</text>
        <dbReference type="Rhea" id="RHEA:16881"/>
        <dbReference type="ChEBI" id="CHEBI:15378"/>
        <dbReference type="ChEBI" id="CHEBI:17359"/>
        <dbReference type="ChEBI" id="CHEBI:18022"/>
        <dbReference type="ChEBI" id="CHEBI:18407"/>
        <dbReference type="ChEBI" id="CHEBI:33542"/>
        <dbReference type="EC" id="2.8.1.1"/>
    </reaction>
</comment>
<comment type="catalytic activity">
    <reaction evidence="1">
        <text>thiosulfate + [thioredoxin]-dithiol = [thioredoxin]-disulfide + hydrogen sulfide + sulfite + 2 H(+)</text>
        <dbReference type="Rhea" id="RHEA:83859"/>
        <dbReference type="Rhea" id="RHEA-COMP:10698"/>
        <dbReference type="Rhea" id="RHEA-COMP:10700"/>
        <dbReference type="ChEBI" id="CHEBI:15378"/>
        <dbReference type="ChEBI" id="CHEBI:17359"/>
        <dbReference type="ChEBI" id="CHEBI:29919"/>
        <dbReference type="ChEBI" id="CHEBI:29950"/>
        <dbReference type="ChEBI" id="CHEBI:33542"/>
        <dbReference type="ChEBI" id="CHEBI:50058"/>
    </reaction>
</comment>
<comment type="subcellular location">
    <subcellularLocation>
        <location evidence="1">Cytoplasm</location>
    </subcellularLocation>
</comment>
<comment type="similarity">
    <text evidence="1">Belongs to the GlpE family.</text>
</comment>
<protein>
    <recommendedName>
        <fullName evidence="1">Thiosulfate sulfurtransferase GlpE</fullName>
        <ecNumber evidence="1">2.8.1.1</ecNumber>
    </recommendedName>
</protein>
<dbReference type="EC" id="2.8.1.1" evidence="1"/>
<dbReference type="EMBL" id="CP000305">
    <property type="protein sequence ID" value="ABG20273.1"/>
    <property type="molecule type" value="Genomic_DNA"/>
</dbReference>
<dbReference type="EMBL" id="ACNQ01000019">
    <property type="protein sequence ID" value="EEO74868.1"/>
    <property type="molecule type" value="Genomic_DNA"/>
</dbReference>
<dbReference type="RefSeq" id="WP_002218928.1">
    <property type="nucleotide sequence ID" value="NZ_ACNQ01000019.1"/>
</dbReference>
<dbReference type="SMR" id="Q1CCK7"/>
<dbReference type="KEGG" id="ypn:YPN_3946"/>
<dbReference type="HOGENOM" id="CLU_089574_14_0_6"/>
<dbReference type="Proteomes" id="UP000008936">
    <property type="component" value="Chromosome"/>
</dbReference>
<dbReference type="GO" id="GO:0005737">
    <property type="term" value="C:cytoplasm"/>
    <property type="evidence" value="ECO:0007669"/>
    <property type="project" value="UniProtKB-SubCell"/>
</dbReference>
<dbReference type="GO" id="GO:0004792">
    <property type="term" value="F:thiosulfate-cyanide sulfurtransferase activity"/>
    <property type="evidence" value="ECO:0007669"/>
    <property type="project" value="UniProtKB-UniRule"/>
</dbReference>
<dbReference type="GO" id="GO:0006071">
    <property type="term" value="P:glycerol metabolic process"/>
    <property type="evidence" value="ECO:0007669"/>
    <property type="project" value="UniProtKB-UniRule"/>
</dbReference>
<dbReference type="CDD" id="cd01444">
    <property type="entry name" value="GlpE_ST"/>
    <property type="match status" value="1"/>
</dbReference>
<dbReference type="Gene3D" id="3.40.250.10">
    <property type="entry name" value="Rhodanese-like domain"/>
    <property type="match status" value="1"/>
</dbReference>
<dbReference type="HAMAP" id="MF_01009">
    <property type="entry name" value="Thiosulf_sulfurtr"/>
    <property type="match status" value="1"/>
</dbReference>
<dbReference type="InterPro" id="IPR050229">
    <property type="entry name" value="GlpE_sulfurtransferase"/>
</dbReference>
<dbReference type="InterPro" id="IPR001763">
    <property type="entry name" value="Rhodanese-like_dom"/>
</dbReference>
<dbReference type="InterPro" id="IPR036873">
    <property type="entry name" value="Rhodanese-like_dom_sf"/>
</dbReference>
<dbReference type="InterPro" id="IPR023695">
    <property type="entry name" value="Thiosulf_sulfurTrfase"/>
</dbReference>
<dbReference type="NCBIfam" id="NF001195">
    <property type="entry name" value="PRK00162.1"/>
    <property type="match status" value="1"/>
</dbReference>
<dbReference type="PANTHER" id="PTHR43031">
    <property type="entry name" value="FAD-DEPENDENT OXIDOREDUCTASE"/>
    <property type="match status" value="1"/>
</dbReference>
<dbReference type="PANTHER" id="PTHR43031:SF6">
    <property type="entry name" value="THIOSULFATE SULFURTRANSFERASE GLPE"/>
    <property type="match status" value="1"/>
</dbReference>
<dbReference type="Pfam" id="PF00581">
    <property type="entry name" value="Rhodanese"/>
    <property type="match status" value="1"/>
</dbReference>
<dbReference type="SMART" id="SM00450">
    <property type="entry name" value="RHOD"/>
    <property type="match status" value="1"/>
</dbReference>
<dbReference type="SUPFAM" id="SSF52821">
    <property type="entry name" value="Rhodanese/Cell cycle control phosphatase"/>
    <property type="match status" value="1"/>
</dbReference>
<dbReference type="PROSITE" id="PS50206">
    <property type="entry name" value="RHODANESE_3"/>
    <property type="match status" value="1"/>
</dbReference>
<organism>
    <name type="scientific">Yersinia pestis bv. Antiqua (strain Nepal516)</name>
    <dbReference type="NCBI Taxonomy" id="377628"/>
    <lineage>
        <taxon>Bacteria</taxon>
        <taxon>Pseudomonadati</taxon>
        <taxon>Pseudomonadota</taxon>
        <taxon>Gammaproteobacteria</taxon>
        <taxon>Enterobacterales</taxon>
        <taxon>Yersiniaceae</taxon>
        <taxon>Yersinia</taxon>
    </lineage>
</organism>
<keyword id="KW-0963">Cytoplasm</keyword>
<keyword id="KW-0808">Transferase</keyword>
<name>GLPE_YERPN</name>
<evidence type="ECO:0000255" key="1">
    <source>
        <dbReference type="HAMAP-Rule" id="MF_01009"/>
    </source>
</evidence>
<feature type="chain" id="PRO_1000062986" description="Thiosulfate sulfurtransferase GlpE">
    <location>
        <begin position="1"/>
        <end position="109"/>
    </location>
</feature>
<feature type="domain" description="Rhodanese" evidence="1">
    <location>
        <begin position="17"/>
        <end position="105"/>
    </location>
</feature>
<feature type="active site" description="Cysteine persulfide intermediate" evidence="1">
    <location>
        <position position="65"/>
    </location>
</feature>
<reference key="1">
    <citation type="journal article" date="2006" name="J. Bacteriol.">
        <title>Complete genome sequence of Yersinia pestis strains Antiqua and Nepal516: evidence of gene reduction in an emerging pathogen.</title>
        <authorList>
            <person name="Chain P.S.G."/>
            <person name="Hu P."/>
            <person name="Malfatti S.A."/>
            <person name="Radnedge L."/>
            <person name="Larimer F."/>
            <person name="Vergez L.M."/>
            <person name="Worsham P."/>
            <person name="Chu M.C."/>
            <person name="Andersen G.L."/>
        </authorList>
    </citation>
    <scope>NUCLEOTIDE SEQUENCE [LARGE SCALE GENOMIC DNA]</scope>
    <source>
        <strain>Nepal516</strain>
    </source>
</reference>
<reference key="2">
    <citation type="submission" date="2009-04" db="EMBL/GenBank/DDBJ databases">
        <title>Yersinia pestis Nepal516A whole genome shotgun sequencing project.</title>
        <authorList>
            <person name="Plunkett G. III"/>
            <person name="Anderson B.D."/>
            <person name="Baumler D.J."/>
            <person name="Burland V."/>
            <person name="Cabot E.L."/>
            <person name="Glasner J.D."/>
            <person name="Mau B."/>
            <person name="Neeno-Eckwall E."/>
            <person name="Perna N.T."/>
            <person name="Munk A.C."/>
            <person name="Tapia R."/>
            <person name="Green L.D."/>
            <person name="Rogers Y.C."/>
            <person name="Detter J.C."/>
            <person name="Bruce D.C."/>
            <person name="Brettin T.S."/>
        </authorList>
    </citation>
    <scope>NUCLEOTIDE SEQUENCE [LARGE SCALE GENOMIC DNA]</scope>
    <source>
        <strain>Nepal516</strain>
    </source>
</reference>
<sequence>MEQFEAISVEQAYLRWKEGKTALVDIRDPQSYEAGHAPGAFHLTNSSLHTFMQQTDFDQPVMVMCYHGNSSKGAAQYLLQQGFDVVYSIDGGFEAWARSYPQDITSESR</sequence>
<proteinExistence type="inferred from homology"/>
<accession>Q1CCK7</accession>
<accession>D1Q2W5</accession>
<gene>
    <name evidence="1" type="primary">glpE</name>
    <name type="ordered locus">YPN_3946</name>
    <name type="ORF">YP516_4478</name>
</gene>